<sequence length="456" mass="52595">MNSSDEEKQLQLITSLKEQAIGEYEDLRAENQKTKEKCDKIRQERDEAVKKLEEFQKISHMVIEEVNFMQNHLEIEKTCRESAEALATKLNKENKTLKRISMLYMAKLGPDVITEEINIDDEDSTTDTDGAAETCVSVQCQKQIKELRDQIVSVQEEKKILAIELENLKSKLVEVIEEVNKVKQEKAVLNSEVLEQRKVLEKCNRVSMLAVEEYEEMQVNLELEKDLRKKAESFAQEMFIEQNKLKRQSHLLLQSSVPDQQLSKALDENAKLTQQLEEERIQHQQKVKELKEQLENETLHKEIHNLKQQLELLEEDKKELELKYQNSEEKARNLKHSVDELQKRVNQSENSVPPPPPPPPPLPPPPPNPIRSFMSMIRKRSHPSGSGAKKEKATQPETPEEVTDLKRQAVEEMMDRIKKGVHLRPVNQTARPKTKPESSKGCESAVDELKGILASQ</sequence>
<accession>Q5RA03</accession>
<comment type="function">
    <text evidence="2 3">Involved in the generation of internal asymmetric signals required for neuronal polarization and neurite outgrowth. Mediates netrin-1-induced F-actin-substrate coupling or 'clutch engagement' within the axon growth cone through activation of CDC42, RAC1 and PAK1-dependent signaling pathway, thereby converting the F-actin retrograde flow into traction forces, concomitantly with filopodium extension and axon outgrowth. Plays a role in cytoskeletal organization by regulating the subcellular localization of phosphoinositide 3-kinase (PI3K) activity at the axonal growth cone. Also plays a role in regenerative neurite outgrowth. In the developing cortex, cooperates with KIF20B to promote both the transition from the multipolar to the bipolar stage and the radial migration of cortical neurons from the ventricular zone toward the superficial layer of the neocortex. Involved in the accumulation of phosphatidylinositol 3,4,5-trisphosphate (PIP3) in the growth cone of primary hippocampal neurons.</text>
</comment>
<comment type="subunit">
    <text evidence="2 3">Interacts with L1CAM; this interaction occurs in axonal growth cones. Interacts with actin filament retrograde flow; this interaction is enhanced in a netrin-1- and PAK1-dependent manner and promotes F-actin-substrate coupling and concomitant formation of traction forces at axonal growth cones. Interacts with RUFY3. Interacts with PFN2. Interacts (via N-terminus) with KIF20B; this interaction is direct and promotes the association of SHTN1 to microtubules in primary neurons. Associates with microtubule.</text>
</comment>
<comment type="subcellular location">
    <subcellularLocation>
        <location evidence="3">Perikaryon</location>
    </subcellularLocation>
    <subcellularLocation>
        <location evidence="3">Cell projection</location>
        <location evidence="3">Axon</location>
    </subcellularLocation>
    <subcellularLocation>
        <location evidence="3">Cell projection</location>
        <location evidence="3">Growth cone</location>
    </subcellularLocation>
    <subcellularLocation>
        <location evidence="3">Cytoplasm</location>
        <location evidence="3">Cytoskeleton</location>
    </subcellularLocation>
    <subcellularLocation>
        <location evidence="2">Cell projection</location>
        <location evidence="2">Filopodium</location>
    </subcellularLocation>
    <subcellularLocation>
        <location evidence="2">Cell projection</location>
        <location evidence="2">Lamellipodium</location>
    </subcellularLocation>
    <text evidence="2 3">Localizes in multiple growth cones at neurite tips before the neuronal symmetry-breaking step. Accumulates in growth cones of a single nascent axon in a neurite length-dependent manner during the neuronal symmetry-breaking step; when absent from the nascent axon's siblings, probably due to competitive transport, prevents the formation of surplus axons. Transported anterogradely from the soma to the axon growth cone in an actin and myosin-dependent manner and passively diffuses back to the cell bodies. Colocalized with L1CAM in close apposition with actin filaments in filopodia and lamellipodia of axonal growth cones in hippocampal neurons. Exhibits retrograde movements in filopodia and lamellopodia of axonal growth cones. Colocalized with KIF20B along microtubules to the tip of the growing cone in primary hippocampal neurons. Recruited to the growth cone of developing axon in a KIF20B- and microtubule-dependent manner.</text>
</comment>
<comment type="domain">
    <text evidence="2">The N-terminus region is necessary for interaction with actin retrograde filament flow and accumulation in neuronal growth cones.</text>
</comment>
<comment type="PTM">
    <text evidence="2">Phosphorylated on Ser-101 and Ser-249 by PAK1 through a CDC42- and RAC1-dependent signaling pathway, which enhances its association with F-actin retrograde flow in filopodia and lamellipodia of axonal growth cones. Phosphorylation on Ser-101 and Ser-249 is increased by netrin-1.</text>
</comment>
<comment type="similarity">
    <text evidence="6">Belongs to the shootin family.</text>
</comment>
<comment type="sequence caution" evidence="6">
    <conflict type="miscellaneous discrepancy">
        <sequence resource="EMBL-CDS" id="CAH91407"/>
    </conflict>
    <text>Wrong translation of mRNA.</text>
</comment>
<dbReference type="EMBL" id="CR859226">
    <property type="protein sequence ID" value="CAH91407.1"/>
    <property type="status" value="ALT_SEQ"/>
    <property type="molecule type" value="mRNA"/>
</dbReference>
<dbReference type="RefSeq" id="NP_001125828.1">
    <property type="nucleotide sequence ID" value="NM_001132356.1"/>
</dbReference>
<dbReference type="SMR" id="Q5RA03"/>
<dbReference type="STRING" id="9601.ENSPPYP00000003137"/>
<dbReference type="GeneID" id="100172756"/>
<dbReference type="KEGG" id="pon:100172756"/>
<dbReference type="CTD" id="57698"/>
<dbReference type="eggNOG" id="ENOG502QVVT">
    <property type="taxonomic scope" value="Eukaryota"/>
</dbReference>
<dbReference type="InParanoid" id="Q5RA03"/>
<dbReference type="OrthoDB" id="6111338at2759"/>
<dbReference type="Proteomes" id="UP000001595">
    <property type="component" value="Unplaced"/>
</dbReference>
<dbReference type="GO" id="GO:0030424">
    <property type="term" value="C:axon"/>
    <property type="evidence" value="ECO:0000250"/>
    <property type="project" value="UniProtKB"/>
</dbReference>
<dbReference type="GO" id="GO:0044295">
    <property type="term" value="C:axonal growth cone"/>
    <property type="evidence" value="ECO:0000250"/>
    <property type="project" value="UniProtKB"/>
</dbReference>
<dbReference type="GO" id="GO:0031252">
    <property type="term" value="C:cell leading edge"/>
    <property type="evidence" value="ECO:0000250"/>
    <property type="project" value="UniProtKB"/>
</dbReference>
<dbReference type="GO" id="GO:0030175">
    <property type="term" value="C:filopodium"/>
    <property type="evidence" value="ECO:0000250"/>
    <property type="project" value="UniProtKB"/>
</dbReference>
<dbReference type="GO" id="GO:0030426">
    <property type="term" value="C:growth cone"/>
    <property type="evidence" value="ECO:0000250"/>
    <property type="project" value="UniProtKB"/>
</dbReference>
<dbReference type="GO" id="GO:0030027">
    <property type="term" value="C:lamellipodium"/>
    <property type="evidence" value="ECO:0000250"/>
    <property type="project" value="UniProtKB"/>
</dbReference>
<dbReference type="GO" id="GO:0005875">
    <property type="term" value="C:microtubule associated complex"/>
    <property type="evidence" value="ECO:0000250"/>
    <property type="project" value="UniProtKB"/>
</dbReference>
<dbReference type="GO" id="GO:0015630">
    <property type="term" value="C:microtubule cytoskeleton"/>
    <property type="evidence" value="ECO:0000250"/>
    <property type="project" value="UniProtKB"/>
</dbReference>
<dbReference type="GO" id="GO:0043204">
    <property type="term" value="C:perikaryon"/>
    <property type="evidence" value="ECO:0000250"/>
    <property type="project" value="UniProtKB"/>
</dbReference>
<dbReference type="GO" id="GO:0048471">
    <property type="term" value="C:perinuclear region of cytoplasm"/>
    <property type="evidence" value="ECO:0000250"/>
    <property type="project" value="UniProtKB"/>
</dbReference>
<dbReference type="GO" id="GO:0051015">
    <property type="term" value="F:actin filament binding"/>
    <property type="evidence" value="ECO:0000250"/>
    <property type="project" value="UniProtKB"/>
</dbReference>
<dbReference type="GO" id="GO:0061573">
    <property type="term" value="P:actin filament bundle retrograde transport"/>
    <property type="evidence" value="ECO:0000250"/>
    <property type="project" value="UniProtKB"/>
</dbReference>
<dbReference type="GO" id="GO:0007409">
    <property type="term" value="P:axonogenesis"/>
    <property type="evidence" value="ECO:0000250"/>
    <property type="project" value="UniProtKB"/>
</dbReference>
<dbReference type="GO" id="GO:0032488">
    <property type="term" value="P:Cdc42 protein signal transduction"/>
    <property type="evidence" value="ECO:0000250"/>
    <property type="project" value="UniProtKB"/>
</dbReference>
<dbReference type="GO" id="GO:0060327">
    <property type="term" value="P:cytoplasmic actin-based contraction involved in cell motility"/>
    <property type="evidence" value="ECO:0000250"/>
    <property type="project" value="UniProtKB"/>
</dbReference>
<dbReference type="GO" id="GO:0061163">
    <property type="term" value="P:endoplasmic reticulum polarization"/>
    <property type="evidence" value="ECO:0000250"/>
    <property type="project" value="UniProtKB"/>
</dbReference>
<dbReference type="GO" id="GO:0038007">
    <property type="term" value="P:netrin-activated signaling pathway"/>
    <property type="evidence" value="ECO:0000250"/>
    <property type="project" value="UniProtKB"/>
</dbReference>
<dbReference type="GO" id="GO:0048812">
    <property type="term" value="P:neuron projection morphogenesis"/>
    <property type="evidence" value="ECO:0000250"/>
    <property type="project" value="UniProtKB"/>
</dbReference>
<dbReference type="GO" id="GO:0045773">
    <property type="term" value="P:positive regulation of axon extension"/>
    <property type="evidence" value="ECO:0000250"/>
    <property type="project" value="UniProtKB"/>
</dbReference>
<dbReference type="GO" id="GO:2001224">
    <property type="term" value="P:positive regulation of neuron migration"/>
    <property type="evidence" value="ECO:0000250"/>
    <property type="project" value="UniProtKB"/>
</dbReference>
<dbReference type="GO" id="GO:0007265">
    <property type="term" value="P:Ras protein signal transduction"/>
    <property type="evidence" value="ECO:0000250"/>
    <property type="project" value="UniProtKB"/>
</dbReference>
<dbReference type="GO" id="GO:2000114">
    <property type="term" value="P:regulation of establishment of cell polarity"/>
    <property type="evidence" value="ECO:0000250"/>
    <property type="project" value="UniProtKB"/>
</dbReference>
<dbReference type="GO" id="GO:0006930">
    <property type="term" value="P:substrate-dependent cell migration, cell extension"/>
    <property type="evidence" value="ECO:0000250"/>
    <property type="project" value="UniProtKB"/>
</dbReference>
<dbReference type="Gene3D" id="1.20.5.1160">
    <property type="entry name" value="Vasodilator-stimulated phosphoprotein"/>
    <property type="match status" value="1"/>
</dbReference>
<dbReference type="InterPro" id="IPR024849">
    <property type="entry name" value="Shootin-1"/>
</dbReference>
<dbReference type="PANTHER" id="PTHR46606">
    <property type="entry name" value="SHOOTIN-1"/>
    <property type="match status" value="1"/>
</dbReference>
<dbReference type="PANTHER" id="PTHR46606:SF3">
    <property type="entry name" value="SHOOTIN-1"/>
    <property type="match status" value="1"/>
</dbReference>
<evidence type="ECO:0000250" key="1">
    <source>
        <dbReference type="UniProtKB" id="A0MZ66"/>
    </source>
</evidence>
<evidence type="ECO:0000250" key="2">
    <source>
        <dbReference type="UniProtKB" id="A0MZ67"/>
    </source>
</evidence>
<evidence type="ECO:0000250" key="3">
    <source>
        <dbReference type="UniProtKB" id="Q8K2Q9"/>
    </source>
</evidence>
<evidence type="ECO:0000255" key="4"/>
<evidence type="ECO:0000256" key="5">
    <source>
        <dbReference type="SAM" id="MobiDB-lite"/>
    </source>
</evidence>
<evidence type="ECO:0000305" key="6"/>
<feature type="chain" id="PRO_0000295742" description="Shootin-1">
    <location>
        <begin position="1"/>
        <end position="456"/>
    </location>
</feature>
<feature type="region of interest" description="Disordered" evidence="5">
    <location>
        <begin position="343"/>
        <end position="405"/>
    </location>
</feature>
<feature type="region of interest" description="Disordered" evidence="5">
    <location>
        <begin position="418"/>
        <end position="445"/>
    </location>
</feature>
<feature type="coiled-coil region" evidence="4">
    <location>
        <begin position="7"/>
        <end position="353"/>
    </location>
</feature>
<feature type="compositionally biased region" description="Pro residues" evidence="5">
    <location>
        <begin position="352"/>
        <end position="369"/>
    </location>
</feature>
<feature type="modified residue" description="N-acetylmethionine" evidence="3">
    <location>
        <position position="1"/>
    </location>
</feature>
<feature type="modified residue" description="Phosphoserine" evidence="3">
    <location>
        <position position="3"/>
    </location>
</feature>
<feature type="modified residue" description="Phosphoserine" evidence="1">
    <location>
        <position position="4"/>
    </location>
</feature>
<feature type="modified residue" description="Phosphoserine; by PAK1" evidence="2">
    <location>
        <position position="101"/>
    </location>
</feature>
<feature type="modified residue" description="Phosphoserine; by PAK1" evidence="2">
    <location>
        <position position="249"/>
    </location>
</feature>
<feature type="modified residue" description="Phosphoserine" evidence="1">
    <location>
        <position position="375"/>
    </location>
</feature>
<keyword id="KW-0007">Acetylation</keyword>
<keyword id="KW-0966">Cell projection</keyword>
<keyword id="KW-0175">Coiled coil</keyword>
<keyword id="KW-0963">Cytoplasm</keyword>
<keyword id="KW-0206">Cytoskeleton</keyword>
<keyword id="KW-0217">Developmental protein</keyword>
<keyword id="KW-0597">Phosphoprotein</keyword>
<keyword id="KW-1185">Reference proteome</keyword>
<gene>
    <name evidence="1" type="primary">SHTN1</name>
</gene>
<proteinExistence type="evidence at transcript level"/>
<name>SHOT1_PONAB</name>
<protein>
    <recommendedName>
        <fullName evidence="2">Shootin-1</fullName>
    </recommendedName>
    <alternativeName>
        <fullName evidence="2">Shootin1</fullName>
    </alternativeName>
</protein>
<reference key="1">
    <citation type="submission" date="2004-11" db="EMBL/GenBank/DDBJ databases">
        <authorList>
            <consortium name="The German cDNA consortium"/>
        </authorList>
    </citation>
    <scope>NUCLEOTIDE SEQUENCE [LARGE SCALE MRNA]</scope>
    <source>
        <tissue>Brain cortex</tissue>
    </source>
</reference>
<organism>
    <name type="scientific">Pongo abelii</name>
    <name type="common">Sumatran orangutan</name>
    <name type="synonym">Pongo pygmaeus abelii</name>
    <dbReference type="NCBI Taxonomy" id="9601"/>
    <lineage>
        <taxon>Eukaryota</taxon>
        <taxon>Metazoa</taxon>
        <taxon>Chordata</taxon>
        <taxon>Craniata</taxon>
        <taxon>Vertebrata</taxon>
        <taxon>Euteleostomi</taxon>
        <taxon>Mammalia</taxon>
        <taxon>Eutheria</taxon>
        <taxon>Euarchontoglires</taxon>
        <taxon>Primates</taxon>
        <taxon>Haplorrhini</taxon>
        <taxon>Catarrhini</taxon>
        <taxon>Hominidae</taxon>
        <taxon>Pongo</taxon>
    </lineage>
</organism>